<sequence length="330" mass="36692">MVKVYYDADANLEFLKGKKIAVLGYGSQGHAQAQSLRDSGLDVVVGLRKDSARWSKAEADGLQVATVPDACAQAEVIQVLLPDEIQGRVYAEEIEPYLSEGKALMFSHGFNIHFGQIVPPKNVDVFLVAPKSPGHLVRRMYAEGKGVPGLVAVHQDYTGKAKDIALAYAKGIGCTKAGVFETSFREETETDLFGEQAVLCGGVSELIKAGFDTLVEAGYAPEMAYFECLHELKLIVDLIYEGGLSRMRYSVSNTAEYGDYMIGPRIVNEETREEMRQVLMEIQDGTFARNWMLENQVKSPQFNAVRKMEQEHPIEEVGARLREMMPWLKK</sequence>
<gene>
    <name evidence="1" type="primary">ilvC</name>
    <name type="ordered locus">Dred_0283</name>
</gene>
<organism>
    <name type="scientific">Desulforamulus reducens (strain ATCC BAA-1160 / DSM 100696 / MI-1)</name>
    <name type="common">Desulfotomaculum reducens</name>
    <dbReference type="NCBI Taxonomy" id="349161"/>
    <lineage>
        <taxon>Bacteria</taxon>
        <taxon>Bacillati</taxon>
        <taxon>Bacillota</taxon>
        <taxon>Clostridia</taxon>
        <taxon>Eubacteriales</taxon>
        <taxon>Peptococcaceae</taxon>
        <taxon>Desulforamulus</taxon>
    </lineage>
</organism>
<proteinExistence type="inferred from homology"/>
<dbReference type="EC" id="1.1.1.86" evidence="1"/>
<dbReference type="EMBL" id="CP000612">
    <property type="protein sequence ID" value="ABO48832.1"/>
    <property type="molecule type" value="Genomic_DNA"/>
</dbReference>
<dbReference type="RefSeq" id="WP_011876670.1">
    <property type="nucleotide sequence ID" value="NC_009253.1"/>
</dbReference>
<dbReference type="SMR" id="A4J179"/>
<dbReference type="STRING" id="349161.Dred_0283"/>
<dbReference type="KEGG" id="drm:Dred_0283"/>
<dbReference type="eggNOG" id="COG0059">
    <property type="taxonomic scope" value="Bacteria"/>
</dbReference>
<dbReference type="HOGENOM" id="CLU_033821_0_1_9"/>
<dbReference type="OrthoDB" id="9804088at2"/>
<dbReference type="UniPathway" id="UPA00047">
    <property type="reaction ID" value="UER00056"/>
</dbReference>
<dbReference type="UniPathway" id="UPA00049">
    <property type="reaction ID" value="UER00060"/>
</dbReference>
<dbReference type="Proteomes" id="UP000001556">
    <property type="component" value="Chromosome"/>
</dbReference>
<dbReference type="GO" id="GO:0005829">
    <property type="term" value="C:cytosol"/>
    <property type="evidence" value="ECO:0007669"/>
    <property type="project" value="TreeGrafter"/>
</dbReference>
<dbReference type="GO" id="GO:0004455">
    <property type="term" value="F:ketol-acid reductoisomerase activity"/>
    <property type="evidence" value="ECO:0007669"/>
    <property type="project" value="UniProtKB-UniRule"/>
</dbReference>
<dbReference type="GO" id="GO:0000287">
    <property type="term" value="F:magnesium ion binding"/>
    <property type="evidence" value="ECO:0007669"/>
    <property type="project" value="UniProtKB-UniRule"/>
</dbReference>
<dbReference type="GO" id="GO:0050661">
    <property type="term" value="F:NADP binding"/>
    <property type="evidence" value="ECO:0007669"/>
    <property type="project" value="InterPro"/>
</dbReference>
<dbReference type="GO" id="GO:0009097">
    <property type="term" value="P:isoleucine biosynthetic process"/>
    <property type="evidence" value="ECO:0007669"/>
    <property type="project" value="UniProtKB-UniRule"/>
</dbReference>
<dbReference type="GO" id="GO:0009099">
    <property type="term" value="P:L-valine biosynthetic process"/>
    <property type="evidence" value="ECO:0007669"/>
    <property type="project" value="UniProtKB-UniRule"/>
</dbReference>
<dbReference type="FunFam" id="3.40.50.720:FF:000023">
    <property type="entry name" value="Ketol-acid reductoisomerase (NADP(+))"/>
    <property type="match status" value="1"/>
</dbReference>
<dbReference type="Gene3D" id="6.10.240.10">
    <property type="match status" value="1"/>
</dbReference>
<dbReference type="Gene3D" id="3.40.50.720">
    <property type="entry name" value="NAD(P)-binding Rossmann-like Domain"/>
    <property type="match status" value="1"/>
</dbReference>
<dbReference type="HAMAP" id="MF_00435">
    <property type="entry name" value="IlvC"/>
    <property type="match status" value="1"/>
</dbReference>
<dbReference type="InterPro" id="IPR008927">
    <property type="entry name" value="6-PGluconate_DH-like_C_sf"/>
</dbReference>
<dbReference type="InterPro" id="IPR013023">
    <property type="entry name" value="KARI"/>
</dbReference>
<dbReference type="InterPro" id="IPR000506">
    <property type="entry name" value="KARI_C"/>
</dbReference>
<dbReference type="InterPro" id="IPR013116">
    <property type="entry name" value="KARI_N"/>
</dbReference>
<dbReference type="InterPro" id="IPR014359">
    <property type="entry name" value="KARI_prok"/>
</dbReference>
<dbReference type="InterPro" id="IPR036291">
    <property type="entry name" value="NAD(P)-bd_dom_sf"/>
</dbReference>
<dbReference type="NCBIfam" id="TIGR00465">
    <property type="entry name" value="ilvC"/>
    <property type="match status" value="1"/>
</dbReference>
<dbReference type="NCBIfam" id="NF004017">
    <property type="entry name" value="PRK05479.1"/>
    <property type="match status" value="1"/>
</dbReference>
<dbReference type="NCBIfam" id="NF009940">
    <property type="entry name" value="PRK13403.1"/>
    <property type="match status" value="1"/>
</dbReference>
<dbReference type="PANTHER" id="PTHR21371">
    <property type="entry name" value="KETOL-ACID REDUCTOISOMERASE, MITOCHONDRIAL"/>
    <property type="match status" value="1"/>
</dbReference>
<dbReference type="PANTHER" id="PTHR21371:SF1">
    <property type="entry name" value="KETOL-ACID REDUCTOISOMERASE, MITOCHONDRIAL"/>
    <property type="match status" value="1"/>
</dbReference>
<dbReference type="Pfam" id="PF01450">
    <property type="entry name" value="KARI_C"/>
    <property type="match status" value="1"/>
</dbReference>
<dbReference type="Pfam" id="PF07991">
    <property type="entry name" value="KARI_N"/>
    <property type="match status" value="1"/>
</dbReference>
<dbReference type="PIRSF" id="PIRSF000116">
    <property type="entry name" value="IlvC_gammaproteo"/>
    <property type="match status" value="1"/>
</dbReference>
<dbReference type="SUPFAM" id="SSF48179">
    <property type="entry name" value="6-phosphogluconate dehydrogenase C-terminal domain-like"/>
    <property type="match status" value="1"/>
</dbReference>
<dbReference type="SUPFAM" id="SSF51735">
    <property type="entry name" value="NAD(P)-binding Rossmann-fold domains"/>
    <property type="match status" value="1"/>
</dbReference>
<dbReference type="PROSITE" id="PS51851">
    <property type="entry name" value="KARI_C"/>
    <property type="match status" value="1"/>
</dbReference>
<dbReference type="PROSITE" id="PS51850">
    <property type="entry name" value="KARI_N"/>
    <property type="match status" value="1"/>
</dbReference>
<name>ILVC_DESRM</name>
<reference key="1">
    <citation type="submission" date="2007-03" db="EMBL/GenBank/DDBJ databases">
        <title>Complete sequence of Desulfotomaculum reducens MI-1.</title>
        <authorList>
            <consortium name="US DOE Joint Genome Institute"/>
            <person name="Copeland A."/>
            <person name="Lucas S."/>
            <person name="Lapidus A."/>
            <person name="Barry K."/>
            <person name="Detter J.C."/>
            <person name="Glavina del Rio T."/>
            <person name="Hammon N."/>
            <person name="Israni S."/>
            <person name="Dalin E."/>
            <person name="Tice H."/>
            <person name="Pitluck S."/>
            <person name="Sims D."/>
            <person name="Brettin T."/>
            <person name="Bruce D."/>
            <person name="Han C."/>
            <person name="Tapia R."/>
            <person name="Schmutz J."/>
            <person name="Larimer F."/>
            <person name="Land M."/>
            <person name="Hauser L."/>
            <person name="Kyrpides N."/>
            <person name="Kim E."/>
            <person name="Tebo B.M."/>
            <person name="Richardson P."/>
        </authorList>
    </citation>
    <scope>NUCLEOTIDE SEQUENCE [LARGE SCALE GENOMIC DNA]</scope>
    <source>
        <strain>ATCC BAA-1160 / DSM 100696 / MI-1</strain>
    </source>
</reference>
<protein>
    <recommendedName>
        <fullName evidence="1">Ketol-acid reductoisomerase (NADP(+))</fullName>
        <shortName evidence="1">KARI</shortName>
        <ecNumber evidence="1">1.1.1.86</ecNumber>
    </recommendedName>
    <alternativeName>
        <fullName evidence="1">Acetohydroxy-acid isomeroreductase</fullName>
        <shortName evidence="1">AHIR</shortName>
    </alternativeName>
    <alternativeName>
        <fullName evidence="1">Alpha-keto-beta-hydroxylacyl reductoisomerase</fullName>
    </alternativeName>
    <alternativeName>
        <fullName evidence="1">Ketol-acid reductoisomerase type 1</fullName>
    </alternativeName>
    <alternativeName>
        <fullName evidence="1">Ketol-acid reductoisomerase type I</fullName>
    </alternativeName>
</protein>
<feature type="chain" id="PRO_1000072321" description="Ketol-acid reductoisomerase (NADP(+))">
    <location>
        <begin position="1"/>
        <end position="330"/>
    </location>
</feature>
<feature type="domain" description="KARI N-terminal Rossmann" evidence="2">
    <location>
        <begin position="2"/>
        <end position="182"/>
    </location>
</feature>
<feature type="domain" description="KARI C-terminal knotted" evidence="3">
    <location>
        <begin position="183"/>
        <end position="328"/>
    </location>
</feature>
<feature type="active site" evidence="1">
    <location>
        <position position="108"/>
    </location>
</feature>
<feature type="binding site" evidence="1">
    <location>
        <begin position="25"/>
        <end position="28"/>
    </location>
    <ligand>
        <name>NADP(+)</name>
        <dbReference type="ChEBI" id="CHEBI:58349"/>
    </ligand>
</feature>
<feature type="binding site" evidence="1">
    <location>
        <position position="48"/>
    </location>
    <ligand>
        <name>NADP(+)</name>
        <dbReference type="ChEBI" id="CHEBI:58349"/>
    </ligand>
</feature>
<feature type="binding site" evidence="1">
    <location>
        <position position="51"/>
    </location>
    <ligand>
        <name>NADP(+)</name>
        <dbReference type="ChEBI" id="CHEBI:58349"/>
    </ligand>
</feature>
<feature type="binding site" evidence="1">
    <location>
        <begin position="83"/>
        <end position="86"/>
    </location>
    <ligand>
        <name>NADP(+)</name>
        <dbReference type="ChEBI" id="CHEBI:58349"/>
    </ligand>
</feature>
<feature type="binding site" evidence="1">
    <location>
        <position position="134"/>
    </location>
    <ligand>
        <name>NADP(+)</name>
        <dbReference type="ChEBI" id="CHEBI:58349"/>
    </ligand>
</feature>
<feature type="binding site" evidence="1">
    <location>
        <position position="191"/>
    </location>
    <ligand>
        <name>Mg(2+)</name>
        <dbReference type="ChEBI" id="CHEBI:18420"/>
        <label>1</label>
    </ligand>
</feature>
<feature type="binding site" evidence="1">
    <location>
        <position position="191"/>
    </location>
    <ligand>
        <name>Mg(2+)</name>
        <dbReference type="ChEBI" id="CHEBI:18420"/>
        <label>2</label>
    </ligand>
</feature>
<feature type="binding site" evidence="1">
    <location>
        <position position="195"/>
    </location>
    <ligand>
        <name>Mg(2+)</name>
        <dbReference type="ChEBI" id="CHEBI:18420"/>
        <label>1</label>
    </ligand>
</feature>
<feature type="binding site" evidence="1">
    <location>
        <position position="227"/>
    </location>
    <ligand>
        <name>Mg(2+)</name>
        <dbReference type="ChEBI" id="CHEBI:18420"/>
        <label>2</label>
    </ligand>
</feature>
<feature type="binding site" evidence="1">
    <location>
        <position position="231"/>
    </location>
    <ligand>
        <name>Mg(2+)</name>
        <dbReference type="ChEBI" id="CHEBI:18420"/>
        <label>2</label>
    </ligand>
</feature>
<feature type="binding site" evidence="1">
    <location>
        <position position="252"/>
    </location>
    <ligand>
        <name>substrate</name>
    </ligand>
</feature>
<keyword id="KW-0028">Amino-acid biosynthesis</keyword>
<keyword id="KW-0100">Branched-chain amino acid biosynthesis</keyword>
<keyword id="KW-0460">Magnesium</keyword>
<keyword id="KW-0479">Metal-binding</keyword>
<keyword id="KW-0521">NADP</keyword>
<keyword id="KW-0560">Oxidoreductase</keyword>
<keyword id="KW-1185">Reference proteome</keyword>
<accession>A4J179</accession>
<comment type="function">
    <text evidence="1">Involved in the biosynthesis of branched-chain amino acids (BCAA). Catalyzes an alkyl-migration followed by a ketol-acid reduction of (S)-2-acetolactate (S2AL) to yield (R)-2,3-dihydroxy-isovalerate. In the isomerase reaction, S2AL is rearranged via a Mg-dependent methyl migration to produce 3-hydroxy-3-methyl-2-ketobutyrate (HMKB). In the reductase reaction, this 2-ketoacid undergoes a metal-dependent reduction by NADPH to yield (R)-2,3-dihydroxy-isovalerate.</text>
</comment>
<comment type="catalytic activity">
    <reaction evidence="1">
        <text>(2R)-2,3-dihydroxy-3-methylbutanoate + NADP(+) = (2S)-2-acetolactate + NADPH + H(+)</text>
        <dbReference type="Rhea" id="RHEA:22068"/>
        <dbReference type="ChEBI" id="CHEBI:15378"/>
        <dbReference type="ChEBI" id="CHEBI:49072"/>
        <dbReference type="ChEBI" id="CHEBI:57783"/>
        <dbReference type="ChEBI" id="CHEBI:58349"/>
        <dbReference type="ChEBI" id="CHEBI:58476"/>
        <dbReference type="EC" id="1.1.1.86"/>
    </reaction>
</comment>
<comment type="catalytic activity">
    <reaction evidence="1">
        <text>(2R,3R)-2,3-dihydroxy-3-methylpentanoate + NADP(+) = (S)-2-ethyl-2-hydroxy-3-oxobutanoate + NADPH + H(+)</text>
        <dbReference type="Rhea" id="RHEA:13493"/>
        <dbReference type="ChEBI" id="CHEBI:15378"/>
        <dbReference type="ChEBI" id="CHEBI:49256"/>
        <dbReference type="ChEBI" id="CHEBI:49258"/>
        <dbReference type="ChEBI" id="CHEBI:57783"/>
        <dbReference type="ChEBI" id="CHEBI:58349"/>
        <dbReference type="EC" id="1.1.1.86"/>
    </reaction>
</comment>
<comment type="cofactor">
    <cofactor evidence="1">
        <name>Mg(2+)</name>
        <dbReference type="ChEBI" id="CHEBI:18420"/>
    </cofactor>
    <text evidence="1">Binds 2 magnesium ions per subunit.</text>
</comment>
<comment type="pathway">
    <text evidence="1">Amino-acid biosynthesis; L-isoleucine biosynthesis; L-isoleucine from 2-oxobutanoate: step 2/4.</text>
</comment>
<comment type="pathway">
    <text evidence="1">Amino-acid biosynthesis; L-valine biosynthesis; L-valine from pyruvate: step 2/4.</text>
</comment>
<comment type="similarity">
    <text evidence="1">Belongs to the ketol-acid reductoisomerase family.</text>
</comment>
<evidence type="ECO:0000255" key="1">
    <source>
        <dbReference type="HAMAP-Rule" id="MF_00435"/>
    </source>
</evidence>
<evidence type="ECO:0000255" key="2">
    <source>
        <dbReference type="PROSITE-ProRule" id="PRU01197"/>
    </source>
</evidence>
<evidence type="ECO:0000255" key="3">
    <source>
        <dbReference type="PROSITE-ProRule" id="PRU01198"/>
    </source>
</evidence>